<evidence type="ECO:0000250" key="1"/>
<evidence type="ECO:0000305" key="2"/>
<keyword id="KW-0963">Cytoplasm</keyword>
<keyword id="KW-0413">Isomerase</keyword>
<keyword id="KW-0479">Metal-binding</keyword>
<keyword id="KW-1185">Reference proteome</keyword>
<keyword id="KW-0862">Zinc</keyword>
<feature type="chain" id="PRO_0000327494" description="Probable mannose-6-phosphate isomerase">
    <location>
        <begin position="1"/>
        <end position="452"/>
    </location>
</feature>
<feature type="active site" evidence="1">
    <location>
        <position position="314"/>
    </location>
</feature>
<feature type="binding site" evidence="1">
    <location>
        <position position="141"/>
    </location>
    <ligand>
        <name>Zn(2+)</name>
        <dbReference type="ChEBI" id="CHEBI:29105"/>
    </ligand>
</feature>
<feature type="binding site" evidence="1">
    <location>
        <position position="143"/>
    </location>
    <ligand>
        <name>Zn(2+)</name>
        <dbReference type="ChEBI" id="CHEBI:29105"/>
    </ligand>
</feature>
<feature type="binding site" evidence="1">
    <location>
        <position position="168"/>
    </location>
    <ligand>
        <name>Zn(2+)</name>
        <dbReference type="ChEBI" id="CHEBI:29105"/>
    </ligand>
</feature>
<feature type="binding site" evidence="1">
    <location>
        <position position="295"/>
    </location>
    <ligand>
        <name>Zn(2+)</name>
        <dbReference type="ChEBI" id="CHEBI:29105"/>
    </ligand>
</feature>
<accession>Q54PA0</accession>
<name>MPI_DICDI</name>
<proteinExistence type="inferred from homology"/>
<protein>
    <recommendedName>
        <fullName>Probable mannose-6-phosphate isomerase</fullName>
        <ecNumber>5.3.1.8</ecNumber>
    </recommendedName>
    <alternativeName>
        <fullName>Phosphohexomutase</fullName>
    </alternativeName>
    <alternativeName>
        <fullName>Phosphomannose isomerase</fullName>
        <shortName>PMI</shortName>
    </alternativeName>
</protein>
<dbReference type="EC" id="5.3.1.8"/>
<dbReference type="EMBL" id="AAFI02000070">
    <property type="protein sequence ID" value="EAL65112.1"/>
    <property type="molecule type" value="Genomic_DNA"/>
</dbReference>
<dbReference type="RefSeq" id="XP_638475.1">
    <property type="nucleotide sequence ID" value="XM_633383.1"/>
</dbReference>
<dbReference type="SMR" id="Q54PA0"/>
<dbReference type="FunCoup" id="Q54PA0">
    <property type="interactions" value="294"/>
</dbReference>
<dbReference type="STRING" id="44689.Q54PA0"/>
<dbReference type="PaxDb" id="44689-DDB0231659"/>
<dbReference type="EnsemblProtists" id="EAL65112">
    <property type="protein sequence ID" value="EAL65112"/>
    <property type="gene ID" value="DDB_G0284685"/>
</dbReference>
<dbReference type="GeneID" id="8624726"/>
<dbReference type="KEGG" id="ddi:DDB_G0284685"/>
<dbReference type="dictyBase" id="DDB_G0284685">
    <property type="gene designation" value="mpi"/>
</dbReference>
<dbReference type="VEuPathDB" id="AmoebaDB:DDB_G0284685"/>
<dbReference type="eggNOG" id="KOG2757">
    <property type="taxonomic scope" value="Eukaryota"/>
</dbReference>
<dbReference type="HOGENOM" id="CLU_026967_2_1_1"/>
<dbReference type="InParanoid" id="Q54PA0"/>
<dbReference type="OMA" id="DIGLFCG"/>
<dbReference type="PhylomeDB" id="Q54PA0"/>
<dbReference type="Reactome" id="R-DDI-446205">
    <property type="pathway name" value="Synthesis of GDP-mannose"/>
</dbReference>
<dbReference type="UniPathway" id="UPA00126">
    <property type="reaction ID" value="UER00423"/>
</dbReference>
<dbReference type="PRO" id="PR:Q54PA0"/>
<dbReference type="Proteomes" id="UP000002195">
    <property type="component" value="Chromosome 4"/>
</dbReference>
<dbReference type="GO" id="GO:0005829">
    <property type="term" value="C:cytosol"/>
    <property type="evidence" value="ECO:0000318"/>
    <property type="project" value="GO_Central"/>
</dbReference>
<dbReference type="GO" id="GO:0004476">
    <property type="term" value="F:mannose-6-phosphate isomerase activity"/>
    <property type="evidence" value="ECO:0000250"/>
    <property type="project" value="dictyBase"/>
</dbReference>
<dbReference type="GO" id="GO:0008270">
    <property type="term" value="F:zinc ion binding"/>
    <property type="evidence" value="ECO:0007669"/>
    <property type="project" value="InterPro"/>
</dbReference>
<dbReference type="GO" id="GO:0005975">
    <property type="term" value="P:carbohydrate metabolic process"/>
    <property type="evidence" value="ECO:0007669"/>
    <property type="project" value="InterPro"/>
</dbReference>
<dbReference type="GO" id="GO:0009298">
    <property type="term" value="P:GDP-mannose biosynthetic process"/>
    <property type="evidence" value="ECO:0000250"/>
    <property type="project" value="dictyBase"/>
</dbReference>
<dbReference type="CDD" id="cd07011">
    <property type="entry name" value="cupin_PMI_type_I_N"/>
    <property type="match status" value="1"/>
</dbReference>
<dbReference type="FunFam" id="2.60.120.10:FF:000446">
    <property type="entry name" value="Probable mannose-6-phosphate isomerase"/>
    <property type="match status" value="1"/>
</dbReference>
<dbReference type="Gene3D" id="2.60.120.10">
    <property type="entry name" value="Jelly Rolls"/>
    <property type="match status" value="2"/>
</dbReference>
<dbReference type="Gene3D" id="1.10.441.10">
    <property type="entry name" value="Phosphomannose Isomerase, domain 2"/>
    <property type="match status" value="1"/>
</dbReference>
<dbReference type="InterPro" id="IPR001250">
    <property type="entry name" value="Man6P_Isoase-1"/>
</dbReference>
<dbReference type="InterPro" id="IPR016305">
    <property type="entry name" value="Mannose-6-P_Isomerase"/>
</dbReference>
<dbReference type="InterPro" id="IPR018050">
    <property type="entry name" value="Pmannose_isomerase-type1_CS"/>
</dbReference>
<dbReference type="InterPro" id="IPR046457">
    <property type="entry name" value="PMI_typeI_cat"/>
</dbReference>
<dbReference type="InterPro" id="IPR046458">
    <property type="entry name" value="PMI_typeI_hel"/>
</dbReference>
<dbReference type="InterPro" id="IPR014710">
    <property type="entry name" value="RmlC-like_jellyroll"/>
</dbReference>
<dbReference type="InterPro" id="IPR011051">
    <property type="entry name" value="RmlC_Cupin_sf"/>
</dbReference>
<dbReference type="NCBIfam" id="TIGR00218">
    <property type="entry name" value="manA"/>
    <property type="match status" value="1"/>
</dbReference>
<dbReference type="PANTHER" id="PTHR10309">
    <property type="entry name" value="MANNOSE-6-PHOSPHATE ISOMERASE"/>
    <property type="match status" value="1"/>
</dbReference>
<dbReference type="PANTHER" id="PTHR10309:SF0">
    <property type="entry name" value="MANNOSE-6-PHOSPHATE ISOMERASE"/>
    <property type="match status" value="1"/>
</dbReference>
<dbReference type="Pfam" id="PF20511">
    <property type="entry name" value="PMI_typeI_cat"/>
    <property type="match status" value="1"/>
</dbReference>
<dbReference type="Pfam" id="PF20512">
    <property type="entry name" value="PMI_typeI_hel"/>
    <property type="match status" value="1"/>
</dbReference>
<dbReference type="PIRSF" id="PIRSF001480">
    <property type="entry name" value="Mannose-6-phosphate_isomerase"/>
    <property type="match status" value="1"/>
</dbReference>
<dbReference type="PRINTS" id="PR00714">
    <property type="entry name" value="MAN6PISMRASE"/>
</dbReference>
<dbReference type="SUPFAM" id="SSF51182">
    <property type="entry name" value="RmlC-like cupins"/>
    <property type="match status" value="1"/>
</dbReference>
<dbReference type="PROSITE" id="PS00966">
    <property type="entry name" value="PMI_I_2"/>
    <property type="match status" value="1"/>
</dbReference>
<comment type="function">
    <text evidence="1">Involved in the synthesis of the GDP-mannose and dolichol-phosphate-mannose required for a number of critical mannosyl transfer reactions.</text>
</comment>
<comment type="catalytic activity">
    <reaction>
        <text>D-mannose 6-phosphate = D-fructose 6-phosphate</text>
        <dbReference type="Rhea" id="RHEA:12356"/>
        <dbReference type="ChEBI" id="CHEBI:58735"/>
        <dbReference type="ChEBI" id="CHEBI:61527"/>
        <dbReference type="EC" id="5.3.1.8"/>
    </reaction>
</comment>
<comment type="cofactor">
    <cofactor evidence="1">
        <name>Zn(2+)</name>
        <dbReference type="ChEBI" id="CHEBI:29105"/>
    </cofactor>
    <text evidence="1">Binds 1 zinc ion per subunit.</text>
</comment>
<comment type="pathway">
    <text>Nucleotide-sugar biosynthesis; GDP-alpha-D-mannose biosynthesis; alpha-D-mannose 1-phosphate from D-fructose 6-phosphate: step 1/2.</text>
</comment>
<comment type="subcellular location">
    <subcellularLocation>
        <location evidence="2">Cytoplasm</location>
    </subcellularLocation>
</comment>
<comment type="similarity">
    <text evidence="2">Belongs to the mannose-6-phosphate isomerase type 1 family.</text>
</comment>
<organism>
    <name type="scientific">Dictyostelium discoideum</name>
    <name type="common">Social amoeba</name>
    <dbReference type="NCBI Taxonomy" id="44689"/>
    <lineage>
        <taxon>Eukaryota</taxon>
        <taxon>Amoebozoa</taxon>
        <taxon>Evosea</taxon>
        <taxon>Eumycetozoa</taxon>
        <taxon>Dictyostelia</taxon>
        <taxon>Dictyosteliales</taxon>
        <taxon>Dictyosteliaceae</taxon>
        <taxon>Dictyostelium</taxon>
    </lineage>
</organism>
<gene>
    <name type="primary">mpi</name>
    <name type="ORF">DDB_G0284685</name>
</gene>
<sequence>MENNNNNNNNNNNNNNNNNNIVLLKCVSQNYEWGKYGSNSTVAKLLKGYAKECSDIIKETIPYAELWMGDHVSAPSKVEYKNKELKLREYIDTVQKEINEKSSTSSSSSSSIRGEIVEKRFGNDFPFLFKVLSIRTALSIQAHPDSQLAQVLFKKYPNIYKDPYHKPEIAIATTPFEALCSFRPLSEIQSFIDTIPEFKNSLPNNLIKLDDCKEYLKSIVTSLLKADGLLISNNLKELNNRLNEKREEERDDLDRLVLKLYSQYPGDVGVFFAYILNYIVLKPGEALFLGAGEPHAYISGDCVECMAPSDNVVRAGLTPKLKDVDTLGDMLTYRTGRPDLVVPQQRPDLSLTNYRCYQPPVDEFQVEYYHLDDCCKNINVYSSKGPSIVLVYSGNLSIENKSNQSTLNNLHTGSILFVPANTDYQFIQSDSSIPVSIYVASVSNRIFNKNNL</sequence>
<reference key="1">
    <citation type="journal article" date="2005" name="Nature">
        <title>The genome of the social amoeba Dictyostelium discoideum.</title>
        <authorList>
            <person name="Eichinger L."/>
            <person name="Pachebat J.A."/>
            <person name="Gloeckner G."/>
            <person name="Rajandream M.A."/>
            <person name="Sucgang R."/>
            <person name="Berriman M."/>
            <person name="Song J."/>
            <person name="Olsen R."/>
            <person name="Szafranski K."/>
            <person name="Xu Q."/>
            <person name="Tunggal B."/>
            <person name="Kummerfeld S."/>
            <person name="Madera M."/>
            <person name="Konfortov B.A."/>
            <person name="Rivero F."/>
            <person name="Bankier A.T."/>
            <person name="Lehmann R."/>
            <person name="Hamlin N."/>
            <person name="Davies R."/>
            <person name="Gaudet P."/>
            <person name="Fey P."/>
            <person name="Pilcher K."/>
            <person name="Chen G."/>
            <person name="Saunders D."/>
            <person name="Sodergren E.J."/>
            <person name="Davis P."/>
            <person name="Kerhornou A."/>
            <person name="Nie X."/>
            <person name="Hall N."/>
            <person name="Anjard C."/>
            <person name="Hemphill L."/>
            <person name="Bason N."/>
            <person name="Farbrother P."/>
            <person name="Desany B."/>
            <person name="Just E."/>
            <person name="Morio T."/>
            <person name="Rost R."/>
            <person name="Churcher C.M."/>
            <person name="Cooper J."/>
            <person name="Haydock S."/>
            <person name="van Driessche N."/>
            <person name="Cronin A."/>
            <person name="Goodhead I."/>
            <person name="Muzny D.M."/>
            <person name="Mourier T."/>
            <person name="Pain A."/>
            <person name="Lu M."/>
            <person name="Harper D."/>
            <person name="Lindsay R."/>
            <person name="Hauser H."/>
            <person name="James K.D."/>
            <person name="Quiles M."/>
            <person name="Madan Babu M."/>
            <person name="Saito T."/>
            <person name="Buchrieser C."/>
            <person name="Wardroper A."/>
            <person name="Felder M."/>
            <person name="Thangavelu M."/>
            <person name="Johnson D."/>
            <person name="Knights A."/>
            <person name="Loulseged H."/>
            <person name="Mungall K.L."/>
            <person name="Oliver K."/>
            <person name="Price C."/>
            <person name="Quail M.A."/>
            <person name="Urushihara H."/>
            <person name="Hernandez J."/>
            <person name="Rabbinowitsch E."/>
            <person name="Steffen D."/>
            <person name="Sanders M."/>
            <person name="Ma J."/>
            <person name="Kohara Y."/>
            <person name="Sharp S."/>
            <person name="Simmonds M.N."/>
            <person name="Spiegler S."/>
            <person name="Tivey A."/>
            <person name="Sugano S."/>
            <person name="White B."/>
            <person name="Walker D."/>
            <person name="Woodward J.R."/>
            <person name="Winckler T."/>
            <person name="Tanaka Y."/>
            <person name="Shaulsky G."/>
            <person name="Schleicher M."/>
            <person name="Weinstock G.M."/>
            <person name="Rosenthal A."/>
            <person name="Cox E.C."/>
            <person name="Chisholm R.L."/>
            <person name="Gibbs R.A."/>
            <person name="Loomis W.F."/>
            <person name="Platzer M."/>
            <person name="Kay R.R."/>
            <person name="Williams J.G."/>
            <person name="Dear P.H."/>
            <person name="Noegel A.A."/>
            <person name="Barrell B.G."/>
            <person name="Kuspa A."/>
        </authorList>
    </citation>
    <scope>NUCLEOTIDE SEQUENCE [LARGE SCALE GENOMIC DNA]</scope>
    <source>
        <strain>AX4</strain>
    </source>
</reference>